<protein>
    <recommendedName>
        <fullName evidence="1">Ribosomal RNA large subunit methyltransferase G</fullName>
        <ecNumber evidence="1">2.1.1.174</ecNumber>
    </recommendedName>
    <alternativeName>
        <fullName evidence="1">23S rRNA m2G1835 methyltransferase</fullName>
    </alternativeName>
    <alternativeName>
        <fullName evidence="1">rRNA (guanine-N(2)-)-methyltransferase RlmG</fullName>
    </alternativeName>
</protein>
<evidence type="ECO:0000255" key="1">
    <source>
        <dbReference type="HAMAP-Rule" id="MF_01859"/>
    </source>
</evidence>
<evidence type="ECO:0000305" key="2"/>
<organism>
    <name type="scientific">Shewanella putrefaciens (strain CN-32 / ATCC BAA-453)</name>
    <dbReference type="NCBI Taxonomy" id="319224"/>
    <lineage>
        <taxon>Bacteria</taxon>
        <taxon>Pseudomonadati</taxon>
        <taxon>Pseudomonadota</taxon>
        <taxon>Gammaproteobacteria</taxon>
        <taxon>Alteromonadales</taxon>
        <taxon>Shewanellaceae</taxon>
        <taxon>Shewanella</taxon>
    </lineage>
</organism>
<feature type="chain" id="PRO_0000366514" description="Ribosomal RNA large subunit methyltransferase G">
    <location>
        <begin position="1"/>
        <end position="378"/>
    </location>
</feature>
<keyword id="KW-0963">Cytoplasm</keyword>
<keyword id="KW-0489">Methyltransferase</keyword>
<keyword id="KW-0698">rRNA processing</keyword>
<keyword id="KW-0949">S-adenosyl-L-methionine</keyword>
<keyword id="KW-0808">Transferase</keyword>
<gene>
    <name evidence="1" type="primary">rlmG</name>
    <name type="ordered locus">Sputcn32_0934</name>
</gene>
<sequence length="378" mass="41857">MTTQFSVAGVELELLRYPAQQESNLQAWDAADEHLLKSLIESEQAAVPTAIVNDSFGALSCGLSKLHPSWPLFVETDARTSFLGTEQNHGRNQLPMDNLQRFTSRDTLPENLALVLMKLPKNLSYFAHQLTRLSQVLPAGTRVLVAAKAKSINSALLDIFAKHLGPASASLAWKNTRVITCVSDGKPRPLAKEVTWAVPEYQLEISNLSNVFAANKLDIGARIMLENLPKGNFKSIVDLGCGNGVLGLRTAQLSPEADIHFIDDSEMAVASAKANWARNQLPADKGHFYWDDCMTHLPEEVQPDLVLCNPPFHQGEAITDHIAWQMFLDARRRLKEGGILHIVGNRHLAYHVKLQRLFKNCTTVASNGKFVILQAQKK</sequence>
<accession>A4Y3Y0</accession>
<dbReference type="EC" id="2.1.1.174" evidence="1"/>
<dbReference type="EMBL" id="CP000681">
    <property type="protein sequence ID" value="ABP74663.1"/>
    <property type="status" value="ALT_INIT"/>
    <property type="molecule type" value="Genomic_DNA"/>
</dbReference>
<dbReference type="SMR" id="A4Y3Y0"/>
<dbReference type="STRING" id="319224.Sputcn32_0934"/>
<dbReference type="KEGG" id="spc:Sputcn32_0934"/>
<dbReference type="eggNOG" id="COG2813">
    <property type="taxonomic scope" value="Bacteria"/>
</dbReference>
<dbReference type="HOGENOM" id="CLU_040288_4_0_6"/>
<dbReference type="GO" id="GO:0005737">
    <property type="term" value="C:cytoplasm"/>
    <property type="evidence" value="ECO:0007669"/>
    <property type="project" value="UniProtKB-SubCell"/>
</dbReference>
<dbReference type="GO" id="GO:0052916">
    <property type="term" value="F:23S rRNA (guanine(1835)-N(2))-methyltransferase activity"/>
    <property type="evidence" value="ECO:0007669"/>
    <property type="project" value="UniProtKB-EC"/>
</dbReference>
<dbReference type="GO" id="GO:0003676">
    <property type="term" value="F:nucleic acid binding"/>
    <property type="evidence" value="ECO:0007669"/>
    <property type="project" value="InterPro"/>
</dbReference>
<dbReference type="CDD" id="cd02440">
    <property type="entry name" value="AdoMet_MTases"/>
    <property type="match status" value="1"/>
</dbReference>
<dbReference type="Gene3D" id="3.40.50.150">
    <property type="entry name" value="Vaccinia Virus protein VP39"/>
    <property type="match status" value="2"/>
</dbReference>
<dbReference type="HAMAP" id="MF_01859">
    <property type="entry name" value="23SrRNA_methyltr_G"/>
    <property type="match status" value="1"/>
</dbReference>
<dbReference type="InterPro" id="IPR002052">
    <property type="entry name" value="DNA_methylase_N6_adenine_CS"/>
</dbReference>
<dbReference type="InterPro" id="IPR017237">
    <property type="entry name" value="rRNA_m2G-MeTrfase_RlmG"/>
</dbReference>
<dbReference type="InterPro" id="IPR046977">
    <property type="entry name" value="RsmC/RlmG"/>
</dbReference>
<dbReference type="InterPro" id="IPR029063">
    <property type="entry name" value="SAM-dependent_MTases_sf"/>
</dbReference>
<dbReference type="InterPro" id="IPR007848">
    <property type="entry name" value="Small_mtfrase_dom"/>
</dbReference>
<dbReference type="PANTHER" id="PTHR47816:SF5">
    <property type="entry name" value="RIBOSOMAL RNA LARGE SUBUNIT METHYLTRANSFERASE G"/>
    <property type="match status" value="1"/>
</dbReference>
<dbReference type="PANTHER" id="PTHR47816">
    <property type="entry name" value="RIBOSOMAL RNA SMALL SUBUNIT METHYLTRANSFERASE C"/>
    <property type="match status" value="1"/>
</dbReference>
<dbReference type="Pfam" id="PF05175">
    <property type="entry name" value="MTS"/>
    <property type="match status" value="1"/>
</dbReference>
<dbReference type="PIRSF" id="PIRSF037565">
    <property type="entry name" value="RRNA_m2G_Mtase_RsmD_prd"/>
    <property type="match status" value="1"/>
</dbReference>
<dbReference type="SUPFAM" id="SSF53335">
    <property type="entry name" value="S-adenosyl-L-methionine-dependent methyltransferases"/>
    <property type="match status" value="1"/>
</dbReference>
<name>RLMG_SHEPC</name>
<comment type="function">
    <text evidence="1">Specifically methylates the guanine in position 1835 (m2G1835) of 23S rRNA.</text>
</comment>
<comment type="catalytic activity">
    <reaction evidence="1">
        <text>guanosine(1835) in 23S rRNA + S-adenosyl-L-methionine = N(2)-methylguanosine(1835) in 23S rRNA + S-adenosyl-L-homocysteine + H(+)</text>
        <dbReference type="Rhea" id="RHEA:42744"/>
        <dbReference type="Rhea" id="RHEA-COMP:10217"/>
        <dbReference type="Rhea" id="RHEA-COMP:10218"/>
        <dbReference type="ChEBI" id="CHEBI:15378"/>
        <dbReference type="ChEBI" id="CHEBI:57856"/>
        <dbReference type="ChEBI" id="CHEBI:59789"/>
        <dbReference type="ChEBI" id="CHEBI:74269"/>
        <dbReference type="ChEBI" id="CHEBI:74481"/>
        <dbReference type="EC" id="2.1.1.174"/>
    </reaction>
</comment>
<comment type="subcellular location">
    <subcellularLocation>
        <location evidence="1">Cytoplasm</location>
    </subcellularLocation>
</comment>
<comment type="similarity">
    <text evidence="1">Belongs to the methyltransferase superfamily. RlmG family.</text>
</comment>
<comment type="sequence caution" evidence="2">
    <conflict type="erroneous initiation">
        <sequence resource="EMBL-CDS" id="ABP74663"/>
    </conflict>
</comment>
<reference key="1">
    <citation type="submission" date="2007-04" db="EMBL/GenBank/DDBJ databases">
        <title>Complete sequence of Shewanella putrefaciens CN-32.</title>
        <authorList>
            <consortium name="US DOE Joint Genome Institute"/>
            <person name="Copeland A."/>
            <person name="Lucas S."/>
            <person name="Lapidus A."/>
            <person name="Barry K."/>
            <person name="Detter J.C."/>
            <person name="Glavina del Rio T."/>
            <person name="Hammon N."/>
            <person name="Israni S."/>
            <person name="Dalin E."/>
            <person name="Tice H."/>
            <person name="Pitluck S."/>
            <person name="Chain P."/>
            <person name="Malfatti S."/>
            <person name="Shin M."/>
            <person name="Vergez L."/>
            <person name="Schmutz J."/>
            <person name="Larimer F."/>
            <person name="Land M."/>
            <person name="Hauser L."/>
            <person name="Kyrpides N."/>
            <person name="Mikhailova N."/>
            <person name="Romine M.F."/>
            <person name="Fredrickson J."/>
            <person name="Tiedje J."/>
            <person name="Richardson P."/>
        </authorList>
    </citation>
    <scope>NUCLEOTIDE SEQUENCE [LARGE SCALE GENOMIC DNA]</scope>
    <source>
        <strain>CN-32 / ATCC BAA-453</strain>
    </source>
</reference>
<proteinExistence type="inferred from homology"/>